<feature type="chain" id="PRO_0000119101" description="Kelch-like protein 2">
    <location>
        <begin position="1"/>
        <end position="593"/>
    </location>
</feature>
<feature type="domain" description="BTB" evidence="3">
    <location>
        <begin position="56"/>
        <end position="123"/>
    </location>
</feature>
<feature type="repeat" description="Kelch 1">
    <location>
        <begin position="308"/>
        <end position="353"/>
    </location>
</feature>
<feature type="repeat" description="Kelch 2">
    <location>
        <begin position="354"/>
        <end position="400"/>
    </location>
</feature>
<feature type="repeat" description="Kelch 3">
    <location>
        <begin position="402"/>
        <end position="447"/>
    </location>
</feature>
<feature type="repeat" description="Kelch 4">
    <location>
        <begin position="449"/>
        <end position="496"/>
    </location>
</feature>
<feature type="repeat" description="Kelch 5">
    <location>
        <begin position="497"/>
        <end position="543"/>
    </location>
</feature>
<feature type="repeat" description="Kelch 6">
    <location>
        <begin position="545"/>
        <end position="591"/>
    </location>
</feature>
<feature type="region of interest" description="Disordered" evidence="4">
    <location>
        <begin position="1"/>
        <end position="28"/>
    </location>
</feature>
<feature type="compositionally biased region" description="Basic and acidic residues" evidence="4">
    <location>
        <begin position="17"/>
        <end position="28"/>
    </location>
</feature>
<feature type="splice variant" id="VSP_047004" description="In isoform 3." evidence="12">
    <location>
        <begin position="1"/>
        <end position="88"/>
    </location>
</feature>
<feature type="splice variant" id="VSP_042837" description="In isoform 2." evidence="10">
    <original>METPPLPPA</original>
    <variation>MVWLEARPQILFV</variation>
    <location>
        <begin position="1"/>
        <end position="9"/>
    </location>
</feature>
<feature type="sequence conflict" description="In Ref. 1; AAC67502." evidence="12" ref="1">
    <original>D</original>
    <variation>N</variation>
    <location>
        <position position="273"/>
    </location>
</feature>
<feature type="sequence conflict" description="In Ref. 4; AAH36468." evidence="12" ref="4">
    <original>R</original>
    <variation>G</variation>
    <location>
        <position position="342"/>
    </location>
</feature>
<feature type="sequence conflict" description="In Ref. 4; AAH22503." evidence="12" ref="4">
    <original>G</original>
    <variation>V</variation>
    <location>
        <position position="457"/>
    </location>
</feature>
<feature type="sequence conflict" description="In Ref. 1; AAC67502." evidence="12" ref="1">
    <original>C</original>
    <variation>Y</variation>
    <location>
        <position position="462"/>
    </location>
</feature>
<feature type="sequence conflict" description="In Ref. 2; BAG37765 and 4; AAH22503." evidence="12" ref="2 4">
    <original>P</original>
    <variation>R</variation>
    <location>
        <position position="592"/>
    </location>
</feature>
<feature type="strand" evidence="16">
    <location>
        <begin position="307"/>
        <end position="312"/>
    </location>
</feature>
<feature type="strand" evidence="16">
    <location>
        <begin position="315"/>
        <end position="320"/>
    </location>
</feature>
<feature type="strand" evidence="16">
    <location>
        <begin position="323"/>
        <end position="327"/>
    </location>
</feature>
<feature type="turn" evidence="16">
    <location>
        <begin position="328"/>
        <end position="331"/>
    </location>
</feature>
<feature type="strand" evidence="16">
    <location>
        <begin position="332"/>
        <end position="335"/>
    </location>
</feature>
<feature type="strand" evidence="16">
    <location>
        <begin position="343"/>
        <end position="345"/>
    </location>
</feature>
<feature type="strand" evidence="16">
    <location>
        <begin position="347"/>
        <end position="351"/>
    </location>
</feature>
<feature type="strand" evidence="16">
    <location>
        <begin position="354"/>
        <end position="358"/>
    </location>
</feature>
<feature type="strand" evidence="16">
    <location>
        <begin position="363"/>
        <end position="366"/>
    </location>
</feature>
<feature type="strand" evidence="16">
    <location>
        <begin position="370"/>
        <end position="374"/>
    </location>
</feature>
<feature type="turn" evidence="16">
    <location>
        <begin position="375"/>
        <end position="378"/>
    </location>
</feature>
<feature type="strand" evidence="16">
    <location>
        <begin position="379"/>
        <end position="383"/>
    </location>
</feature>
<feature type="strand" evidence="16">
    <location>
        <begin position="394"/>
        <end position="398"/>
    </location>
</feature>
<feature type="strand" evidence="16">
    <location>
        <begin position="401"/>
        <end position="405"/>
    </location>
</feature>
<feature type="strand" evidence="16">
    <location>
        <begin position="410"/>
        <end position="413"/>
    </location>
</feature>
<feature type="strand" evidence="16">
    <location>
        <begin position="417"/>
        <end position="421"/>
    </location>
</feature>
<feature type="turn" evidence="16">
    <location>
        <begin position="422"/>
        <end position="425"/>
    </location>
</feature>
<feature type="strand" evidence="16">
    <location>
        <begin position="426"/>
        <end position="430"/>
    </location>
</feature>
<feature type="strand" evidence="16">
    <location>
        <begin position="441"/>
        <end position="445"/>
    </location>
</feature>
<feature type="strand" evidence="16">
    <location>
        <begin position="448"/>
        <end position="452"/>
    </location>
</feature>
<feature type="turn" evidence="16">
    <location>
        <begin position="457"/>
        <end position="460"/>
    </location>
</feature>
<feature type="strand" evidence="16">
    <location>
        <begin position="466"/>
        <end position="470"/>
    </location>
</feature>
<feature type="turn" evidence="16">
    <location>
        <begin position="471"/>
        <end position="474"/>
    </location>
</feature>
<feature type="strand" evidence="16">
    <location>
        <begin position="475"/>
        <end position="478"/>
    </location>
</feature>
<feature type="strand" evidence="16">
    <location>
        <begin position="490"/>
        <end position="494"/>
    </location>
</feature>
<feature type="strand" evidence="16">
    <location>
        <begin position="497"/>
        <end position="501"/>
    </location>
</feature>
<feature type="strand" evidence="15">
    <location>
        <begin position="504"/>
        <end position="509"/>
    </location>
</feature>
<feature type="strand" evidence="16">
    <location>
        <begin position="513"/>
        <end position="516"/>
    </location>
</feature>
<feature type="turn" evidence="16">
    <location>
        <begin position="518"/>
        <end position="520"/>
    </location>
</feature>
<feature type="strand" evidence="16">
    <location>
        <begin position="523"/>
        <end position="525"/>
    </location>
</feature>
<feature type="strand" evidence="16">
    <location>
        <begin position="537"/>
        <end position="541"/>
    </location>
</feature>
<feature type="strand" evidence="16">
    <location>
        <begin position="544"/>
        <end position="548"/>
    </location>
</feature>
<feature type="strand" evidence="16">
    <location>
        <begin position="553"/>
        <end position="556"/>
    </location>
</feature>
<feature type="strand" evidence="16">
    <location>
        <begin position="560"/>
        <end position="564"/>
    </location>
</feature>
<feature type="turn" evidence="16">
    <location>
        <begin position="565"/>
        <end position="568"/>
    </location>
</feature>
<feature type="strand" evidence="16">
    <location>
        <begin position="569"/>
        <end position="572"/>
    </location>
</feature>
<feature type="strand" evidence="16">
    <location>
        <begin position="585"/>
        <end position="590"/>
    </location>
</feature>
<name>KLHL2_HUMAN</name>
<reference key="1">
    <citation type="journal article" date="1999" name="Mol. Biol. Cell">
        <title>Characterization of Mayven, a novel actin-binding protein predominantly expressed in brain.</title>
        <authorList>
            <person name="Soltysik-Espanola M.B."/>
            <person name="Rogers R.A."/>
            <person name="Jiang S."/>
            <person name="Kim T.A."/>
            <person name="Gaedigk R."/>
            <person name="White R.A."/>
            <person name="Avraham H."/>
            <person name="Avraham S."/>
        </authorList>
    </citation>
    <scope>NUCLEOTIDE SEQUENCE [MRNA] (ISOFORM 1)</scope>
    <scope>FUNCTION</scope>
    <scope>SUBUNIT</scope>
    <scope>SUBCELLULAR LOCATION</scope>
    <scope>TISSUE SPECIFICITY</scope>
</reference>
<reference key="2">
    <citation type="journal article" date="2004" name="Nat. Genet.">
        <title>Complete sequencing and characterization of 21,243 full-length human cDNAs.</title>
        <authorList>
            <person name="Ota T."/>
            <person name="Suzuki Y."/>
            <person name="Nishikawa T."/>
            <person name="Otsuki T."/>
            <person name="Sugiyama T."/>
            <person name="Irie R."/>
            <person name="Wakamatsu A."/>
            <person name="Hayashi K."/>
            <person name="Sato H."/>
            <person name="Nagai K."/>
            <person name="Kimura K."/>
            <person name="Makita H."/>
            <person name="Sekine M."/>
            <person name="Obayashi M."/>
            <person name="Nishi T."/>
            <person name="Shibahara T."/>
            <person name="Tanaka T."/>
            <person name="Ishii S."/>
            <person name="Yamamoto J."/>
            <person name="Saito K."/>
            <person name="Kawai Y."/>
            <person name="Isono Y."/>
            <person name="Nakamura Y."/>
            <person name="Nagahari K."/>
            <person name="Murakami K."/>
            <person name="Yasuda T."/>
            <person name="Iwayanagi T."/>
            <person name="Wagatsuma M."/>
            <person name="Shiratori A."/>
            <person name="Sudo H."/>
            <person name="Hosoiri T."/>
            <person name="Kaku Y."/>
            <person name="Kodaira H."/>
            <person name="Kondo H."/>
            <person name="Sugawara M."/>
            <person name="Takahashi M."/>
            <person name="Kanda K."/>
            <person name="Yokoi T."/>
            <person name="Furuya T."/>
            <person name="Kikkawa E."/>
            <person name="Omura Y."/>
            <person name="Abe K."/>
            <person name="Kamihara K."/>
            <person name="Katsuta N."/>
            <person name="Sato K."/>
            <person name="Tanikawa M."/>
            <person name="Yamazaki M."/>
            <person name="Ninomiya K."/>
            <person name="Ishibashi T."/>
            <person name="Yamashita H."/>
            <person name="Murakawa K."/>
            <person name="Fujimori K."/>
            <person name="Tanai H."/>
            <person name="Kimata M."/>
            <person name="Watanabe M."/>
            <person name="Hiraoka S."/>
            <person name="Chiba Y."/>
            <person name="Ishida S."/>
            <person name="Ono Y."/>
            <person name="Takiguchi S."/>
            <person name="Watanabe S."/>
            <person name="Yosida M."/>
            <person name="Hotuta T."/>
            <person name="Kusano J."/>
            <person name="Kanehori K."/>
            <person name="Takahashi-Fujii A."/>
            <person name="Hara H."/>
            <person name="Tanase T.-O."/>
            <person name="Nomura Y."/>
            <person name="Togiya S."/>
            <person name="Komai F."/>
            <person name="Hara R."/>
            <person name="Takeuchi K."/>
            <person name="Arita M."/>
            <person name="Imose N."/>
            <person name="Musashino K."/>
            <person name="Yuuki H."/>
            <person name="Oshima A."/>
            <person name="Sasaki N."/>
            <person name="Aotsuka S."/>
            <person name="Yoshikawa Y."/>
            <person name="Matsunawa H."/>
            <person name="Ichihara T."/>
            <person name="Shiohata N."/>
            <person name="Sano S."/>
            <person name="Moriya S."/>
            <person name="Momiyama H."/>
            <person name="Satoh N."/>
            <person name="Takami S."/>
            <person name="Terashima Y."/>
            <person name="Suzuki O."/>
            <person name="Nakagawa S."/>
            <person name="Senoh A."/>
            <person name="Mizoguchi H."/>
            <person name="Goto Y."/>
            <person name="Shimizu F."/>
            <person name="Wakebe H."/>
            <person name="Hishigaki H."/>
            <person name="Watanabe T."/>
            <person name="Sugiyama A."/>
            <person name="Takemoto M."/>
            <person name="Kawakami B."/>
            <person name="Yamazaki M."/>
            <person name="Watanabe K."/>
            <person name="Kumagai A."/>
            <person name="Itakura S."/>
            <person name="Fukuzumi Y."/>
            <person name="Fujimori Y."/>
            <person name="Komiyama M."/>
            <person name="Tashiro H."/>
            <person name="Tanigami A."/>
            <person name="Fujiwara T."/>
            <person name="Ono T."/>
            <person name="Yamada K."/>
            <person name="Fujii Y."/>
            <person name="Ozaki K."/>
            <person name="Hirao M."/>
            <person name="Ohmori Y."/>
            <person name="Kawabata A."/>
            <person name="Hikiji T."/>
            <person name="Kobatake N."/>
            <person name="Inagaki H."/>
            <person name="Ikema Y."/>
            <person name="Okamoto S."/>
            <person name="Okitani R."/>
            <person name="Kawakami T."/>
            <person name="Noguchi S."/>
            <person name="Itoh T."/>
            <person name="Shigeta K."/>
            <person name="Senba T."/>
            <person name="Matsumura K."/>
            <person name="Nakajima Y."/>
            <person name="Mizuno T."/>
            <person name="Morinaga M."/>
            <person name="Sasaki M."/>
            <person name="Togashi T."/>
            <person name="Oyama M."/>
            <person name="Hata H."/>
            <person name="Watanabe M."/>
            <person name="Komatsu T."/>
            <person name="Mizushima-Sugano J."/>
            <person name="Satoh T."/>
            <person name="Shirai Y."/>
            <person name="Takahashi Y."/>
            <person name="Nakagawa K."/>
            <person name="Okumura K."/>
            <person name="Nagase T."/>
            <person name="Nomura N."/>
            <person name="Kikuchi H."/>
            <person name="Masuho Y."/>
            <person name="Yamashita R."/>
            <person name="Nakai K."/>
            <person name="Yada T."/>
            <person name="Nakamura Y."/>
            <person name="Ohara O."/>
            <person name="Isogai T."/>
            <person name="Sugano S."/>
        </authorList>
    </citation>
    <scope>NUCLEOTIDE SEQUENCE [LARGE SCALE MRNA] (ISOFORMS 1 AND 2)</scope>
    <source>
        <tissue>Brain cortex</tissue>
        <tissue>Cerebellum</tissue>
    </source>
</reference>
<reference key="3">
    <citation type="journal article" date="2005" name="Nature">
        <title>Generation and annotation of the DNA sequences of human chromosomes 2 and 4.</title>
        <authorList>
            <person name="Hillier L.W."/>
            <person name="Graves T.A."/>
            <person name="Fulton R.S."/>
            <person name="Fulton L.A."/>
            <person name="Pepin K.H."/>
            <person name="Minx P."/>
            <person name="Wagner-McPherson C."/>
            <person name="Layman D."/>
            <person name="Wylie K."/>
            <person name="Sekhon M."/>
            <person name="Becker M.C."/>
            <person name="Fewell G.A."/>
            <person name="Delehaunty K.D."/>
            <person name="Miner T.L."/>
            <person name="Nash W.E."/>
            <person name="Kremitzki C."/>
            <person name="Oddy L."/>
            <person name="Du H."/>
            <person name="Sun H."/>
            <person name="Bradshaw-Cordum H."/>
            <person name="Ali J."/>
            <person name="Carter J."/>
            <person name="Cordes M."/>
            <person name="Harris A."/>
            <person name="Isak A."/>
            <person name="van Brunt A."/>
            <person name="Nguyen C."/>
            <person name="Du F."/>
            <person name="Courtney L."/>
            <person name="Kalicki J."/>
            <person name="Ozersky P."/>
            <person name="Abbott S."/>
            <person name="Armstrong J."/>
            <person name="Belter E.A."/>
            <person name="Caruso L."/>
            <person name="Cedroni M."/>
            <person name="Cotton M."/>
            <person name="Davidson T."/>
            <person name="Desai A."/>
            <person name="Elliott G."/>
            <person name="Erb T."/>
            <person name="Fronick C."/>
            <person name="Gaige T."/>
            <person name="Haakenson W."/>
            <person name="Haglund K."/>
            <person name="Holmes A."/>
            <person name="Harkins R."/>
            <person name="Kim K."/>
            <person name="Kruchowski S.S."/>
            <person name="Strong C.M."/>
            <person name="Grewal N."/>
            <person name="Goyea E."/>
            <person name="Hou S."/>
            <person name="Levy A."/>
            <person name="Martinka S."/>
            <person name="Mead K."/>
            <person name="McLellan M.D."/>
            <person name="Meyer R."/>
            <person name="Randall-Maher J."/>
            <person name="Tomlinson C."/>
            <person name="Dauphin-Kohlberg S."/>
            <person name="Kozlowicz-Reilly A."/>
            <person name="Shah N."/>
            <person name="Swearengen-Shahid S."/>
            <person name="Snider J."/>
            <person name="Strong J.T."/>
            <person name="Thompson J."/>
            <person name="Yoakum M."/>
            <person name="Leonard S."/>
            <person name="Pearman C."/>
            <person name="Trani L."/>
            <person name="Radionenko M."/>
            <person name="Waligorski J.E."/>
            <person name="Wang C."/>
            <person name="Rock S.M."/>
            <person name="Tin-Wollam A.-M."/>
            <person name="Maupin R."/>
            <person name="Latreille P."/>
            <person name="Wendl M.C."/>
            <person name="Yang S.-P."/>
            <person name="Pohl C."/>
            <person name="Wallis J.W."/>
            <person name="Spieth J."/>
            <person name="Bieri T.A."/>
            <person name="Berkowicz N."/>
            <person name="Nelson J.O."/>
            <person name="Osborne J."/>
            <person name="Ding L."/>
            <person name="Meyer R."/>
            <person name="Sabo A."/>
            <person name="Shotland Y."/>
            <person name="Sinha P."/>
            <person name="Wohldmann P.E."/>
            <person name="Cook L.L."/>
            <person name="Hickenbotham M.T."/>
            <person name="Eldred J."/>
            <person name="Williams D."/>
            <person name="Jones T.A."/>
            <person name="She X."/>
            <person name="Ciccarelli F.D."/>
            <person name="Izaurralde E."/>
            <person name="Taylor J."/>
            <person name="Schmutz J."/>
            <person name="Myers R.M."/>
            <person name="Cox D.R."/>
            <person name="Huang X."/>
            <person name="McPherson J.D."/>
            <person name="Mardis E.R."/>
            <person name="Clifton S.W."/>
            <person name="Warren W.C."/>
            <person name="Chinwalla A.T."/>
            <person name="Eddy S.R."/>
            <person name="Marra M.A."/>
            <person name="Ovcharenko I."/>
            <person name="Furey T.S."/>
            <person name="Miller W."/>
            <person name="Eichler E.E."/>
            <person name="Bork P."/>
            <person name="Suyama M."/>
            <person name="Torrents D."/>
            <person name="Waterston R.H."/>
            <person name="Wilson R.K."/>
        </authorList>
    </citation>
    <scope>NUCLEOTIDE SEQUENCE [LARGE SCALE GENOMIC DNA]</scope>
</reference>
<reference key="4">
    <citation type="journal article" date="2004" name="Genome Res.">
        <title>The status, quality, and expansion of the NIH full-length cDNA project: the Mammalian Gene Collection (MGC).</title>
        <authorList>
            <consortium name="The MGC Project Team"/>
        </authorList>
    </citation>
    <scope>NUCLEOTIDE SEQUENCE [LARGE SCALE MRNA] (ISOFORM 1)</scope>
    <source>
        <tissue>Hypothalamus</tissue>
    </source>
</reference>
<reference key="5">
    <citation type="journal article" date="2004" name="Exp. Cell Res.">
        <title>hDKIR, a human homologue of the Drosophila kelch protein, involved in a ring-like structure.</title>
        <authorList>
            <person name="Mai A."/>
            <person name="Jung S.K."/>
            <person name="Yonehara S."/>
        </authorList>
    </citation>
    <scope>INTERACTION WITH KLHL12</scope>
</reference>
<reference key="6">
    <citation type="journal article" date="2005" name="J. Neurochem.">
        <title>Process elongation of oligodendrocytes is promoted by the Kelch-related actin-binding protein Mayven.</title>
        <authorList>
            <person name="Jiang S."/>
            <person name="Avraham H.K."/>
            <person name="Park S.Y."/>
            <person name="Kim T.A."/>
            <person name="Bu X."/>
            <person name="Seng S."/>
            <person name="Avraham S."/>
        </authorList>
    </citation>
    <scope>FUNCTION</scope>
    <scope>SUBCELLULAR LOCATION</scope>
    <scope>INTERACTION WITH FYN</scope>
</reference>
<reference key="7">
    <citation type="journal article" date="2013" name="Biochem. Biophys. Res. Commun.">
        <title>KLHL2 interacts with and ubiquitinates WNK kinases.</title>
        <authorList>
            <person name="Takahashi D."/>
            <person name="Mori T."/>
            <person name="Wakabayashi M."/>
            <person name="Mori Y."/>
            <person name="Susa K."/>
            <person name="Zeniya M."/>
            <person name="Sohara E."/>
            <person name="Rai T."/>
            <person name="Sasaki S."/>
            <person name="Uchida S."/>
        </authorList>
    </citation>
    <scope>FUNCTION</scope>
    <scope>PATHWAY</scope>
    <scope>IDENTIFICATION IN A BCR (BTB-CUL3-RBX1) E3 UBIQUITIN LIGASE COMPLEX</scope>
</reference>
<reference key="8">
    <citation type="journal article" date="2013" name="J. Biol. Chem.">
        <title>Structural basis for Cul3 assembly with the BTB-Kelch family of E3 ubiquitin ligases.</title>
        <authorList>
            <person name="Canning P."/>
            <person name="Cooper C.D."/>
            <person name="Krojer T."/>
            <person name="Murray J.W."/>
            <person name="Pike A.C."/>
            <person name="Chaikuad A."/>
            <person name="Keates T."/>
            <person name="Thangaratnarajah C."/>
            <person name="Hojzan V."/>
            <person name="Marsden B.D."/>
            <person name="Gileadi O."/>
            <person name="Knapp S."/>
            <person name="von Delft F."/>
            <person name="Bullock A.N."/>
        </authorList>
    </citation>
    <scope>X-RAY CRYSTALLOGRAPHY (1.99 ANGSTROMS) OF 294-591</scope>
</reference>
<reference evidence="14" key="9">
    <citation type="journal article" date="2014" name="Biochem. J.">
        <title>Structural and biochemical characterization of the KLHL3-WNK kinase interaction important in blood pressure regulation.</title>
        <authorList>
            <person name="Schumacher F.R."/>
            <person name="Sorrell F.J."/>
            <person name="Alessi D.R."/>
            <person name="Bullock A.N."/>
            <person name="Kurz T."/>
        </authorList>
    </citation>
    <scope>X-RAY CRYSTALLOGRAPHY (1.56 ANGSTROMS) OF 294-591 IN COMPLEX WITH WNK4</scope>
</reference>
<evidence type="ECO:0000250" key="1">
    <source>
        <dbReference type="UniProtKB" id="F1LZF0"/>
    </source>
</evidence>
<evidence type="ECO:0000250" key="2">
    <source>
        <dbReference type="UniProtKB" id="Q8JZP3"/>
    </source>
</evidence>
<evidence type="ECO:0000255" key="3">
    <source>
        <dbReference type="PROSITE-ProRule" id="PRU00037"/>
    </source>
</evidence>
<evidence type="ECO:0000256" key="4">
    <source>
        <dbReference type="SAM" id="MobiDB-lite"/>
    </source>
</evidence>
<evidence type="ECO:0000269" key="5">
    <source>
    </source>
</evidence>
<evidence type="ECO:0000269" key="6">
    <source>
    </source>
</evidence>
<evidence type="ECO:0000269" key="7">
    <source>
    </source>
</evidence>
<evidence type="ECO:0000269" key="8">
    <source>
    </source>
</evidence>
<evidence type="ECO:0000303" key="9">
    <source>
    </source>
</evidence>
<evidence type="ECO:0000303" key="10">
    <source>
    </source>
</evidence>
<evidence type="ECO:0000303" key="11">
    <source>
    </source>
</evidence>
<evidence type="ECO:0000305" key="12"/>
<evidence type="ECO:0000312" key="13">
    <source>
        <dbReference type="HGNC" id="HGNC:6353"/>
    </source>
</evidence>
<evidence type="ECO:0007744" key="14">
    <source>
        <dbReference type="PDB" id="4CHB"/>
    </source>
</evidence>
<evidence type="ECO:0007829" key="15">
    <source>
        <dbReference type="PDB" id="2XN4"/>
    </source>
</evidence>
<evidence type="ECO:0007829" key="16">
    <source>
        <dbReference type="PDB" id="4CHB"/>
    </source>
</evidence>
<accession>O95198</accession>
<accession>A6NCM7</accession>
<accession>B2RD18</accession>
<accession>B4DFH7</accession>
<accession>F5H6M3</accession>
<accession>Q8N484</accession>
<accession>Q8TBH5</accession>
<keyword id="KW-0002">3D-structure</keyword>
<keyword id="KW-0009">Actin-binding</keyword>
<keyword id="KW-0025">Alternative splicing</keyword>
<keyword id="KW-0966">Cell projection</keyword>
<keyword id="KW-0963">Cytoplasm</keyword>
<keyword id="KW-0206">Cytoskeleton</keyword>
<keyword id="KW-0880">Kelch repeat</keyword>
<keyword id="KW-1267">Proteomics identification</keyword>
<keyword id="KW-1185">Reference proteome</keyword>
<keyword id="KW-0677">Repeat</keyword>
<keyword id="KW-0833">Ubl conjugation pathway</keyword>
<comment type="function">
    <text evidence="2 5 7 8">Substrate-specific adapter of a BCR (BTB-CUL3-RBX1) E3 ubiquitin ligase complex that mediates the ubiquitination of target proteins, such as NPTXR, WNK1, WNK3 and WNK4, leading most often to their proteasomal degradation (PubMed:23838290). The BCR(KLHL2) complex catalyzes ubiquitination and degradation of NPTXR (By similarity). Responsible for degradative ubiquitination of the WNK kinases WNK1, WNK3 and WNK4 (PubMed:23838290). Plays a role in the reorganization of the actin cytoskeleton (PubMed:10397770). Promotes growth of cell projections in oligodendrocyte precursors (PubMed:15715669).</text>
</comment>
<comment type="pathway">
    <text evidence="8">Protein modification; protein ubiquitination.</text>
</comment>
<comment type="subunit">
    <text evidence="5 6 7 8">Component of the BCR(KLHL2) E3 ubiquitin ligase complex, at least composed of CUL3 and KLHL2 and RBX1 (PubMed:23838290). Binds actin (PubMed:10397770). Interacts with KLHL12 (PubMed:15383316). Interacts (via N-terminus) with FYN (via SH3 domain) (PubMed:15715669).</text>
</comment>
<comment type="interaction">
    <interactant intactId="EBI-746999">
        <id>O95198</id>
    </interactant>
    <interactant intactId="EBI-10212133">
        <id>P50895</id>
        <label>BCAM</label>
    </interactant>
    <organismsDiffer>false</organismsDiffer>
    <experiments>6</experiments>
</comment>
<comment type="interaction">
    <interactant intactId="EBI-746999">
        <id>O95198</id>
    </interactant>
    <interactant intactId="EBI-358049">
        <id>Q13895</id>
        <label>BYSL</label>
    </interactant>
    <organismsDiffer>false</organismsDiffer>
    <experiments>3</experiments>
</comment>
<comment type="interaction">
    <interactant intactId="EBI-746999">
        <id>O95198</id>
    </interactant>
    <interactant intactId="EBI-10260148">
        <id>Q86WV7</id>
        <label>CCDC43</label>
    </interactant>
    <organismsDiffer>false</organismsDiffer>
    <experiments>5</experiments>
</comment>
<comment type="interaction">
    <interactant intactId="EBI-746999">
        <id>O95198</id>
    </interactant>
    <interactant intactId="EBI-9247198">
        <id>Q96MW1</id>
        <label>CCDC43</label>
    </interactant>
    <organismsDiffer>false</organismsDiffer>
    <experiments>3</experiments>
</comment>
<comment type="interaction">
    <interactant intactId="EBI-746999">
        <id>O95198</id>
    </interactant>
    <interactant intactId="EBI-295634">
        <id>Q16543</id>
        <label>CDC37</label>
    </interactant>
    <organismsDiffer>false</organismsDiffer>
    <experiments>3</experiments>
</comment>
<comment type="interaction">
    <interactant intactId="EBI-746999">
        <id>O95198</id>
    </interactant>
    <interactant intactId="EBI-12155483">
        <id>Q9H1P6</id>
        <label>CIMIP1</label>
    </interactant>
    <organismsDiffer>false</organismsDiffer>
    <experiments>3</experiments>
</comment>
<comment type="interaction">
    <interactant intactId="EBI-746999">
        <id>O95198</id>
    </interactant>
    <interactant intactId="EBI-750020">
        <id>P49760</id>
        <label>CLK2</label>
    </interactant>
    <organismsDiffer>false</organismsDiffer>
    <experiments>6</experiments>
</comment>
<comment type="interaction">
    <interactant intactId="EBI-746999">
        <id>O95198</id>
    </interactant>
    <interactant intactId="EBI-456129">
        <id>Q13618</id>
        <label>CUL3</label>
    </interactant>
    <organismsDiffer>false</organismsDiffer>
    <experiments>8</experiments>
</comment>
<comment type="interaction">
    <interactant intactId="EBI-746999">
        <id>O95198</id>
    </interactant>
    <interactant intactId="EBI-373289">
        <id>Q9HCG8</id>
        <label>CWC22</label>
    </interactant>
    <organismsDiffer>false</organismsDiffer>
    <experiments>3</experiments>
</comment>
<comment type="interaction">
    <interactant intactId="EBI-746999">
        <id>O95198</id>
    </interactant>
    <interactant intactId="EBI-742350">
        <id>Q14241</id>
        <label>ELOA</label>
    </interactant>
    <organismsDiffer>false</organismsDiffer>
    <experiments>3</experiments>
</comment>
<comment type="interaction">
    <interactant intactId="EBI-746999">
        <id>O95198</id>
    </interactant>
    <interactant intactId="EBI-751001">
        <id>Q14145</id>
        <label>KEAP1</label>
    </interactant>
    <organismsDiffer>false</organismsDiffer>
    <experiments>7</experiments>
</comment>
<comment type="interaction">
    <interactant intactId="EBI-746999">
        <id>O95198</id>
    </interactant>
    <interactant intactId="EBI-740929">
        <id>Q53G59</id>
        <label>KLHL12</label>
    </interactant>
    <organismsDiffer>false</organismsDiffer>
    <experiments>10</experiments>
</comment>
<comment type="interaction">
    <interactant intactId="EBI-746999">
        <id>O95198</id>
    </interactant>
    <interactant intactId="EBI-746999">
        <id>O95198</id>
        <label>KLHL2</label>
    </interactant>
    <organismsDiffer>false</organismsDiffer>
    <experiments>5</experiments>
</comment>
<comment type="interaction">
    <interactant intactId="EBI-746999">
        <id>O95198</id>
    </interactant>
    <interactant intactId="EBI-8524663">
        <id>Q9UH77</id>
        <label>KLHL3</label>
    </interactant>
    <organismsDiffer>false</organismsDiffer>
    <experiments>6</experiments>
</comment>
<comment type="interaction">
    <interactant intactId="EBI-746999">
        <id>O95198</id>
    </interactant>
    <interactant intactId="EBI-1048159">
        <id>P55081</id>
        <label>MFAP1</label>
    </interactant>
    <organismsDiffer>false</organismsDiffer>
    <experiments>3</experiments>
</comment>
<comment type="interaction">
    <interactant intactId="EBI-746999">
        <id>O95198</id>
    </interactant>
    <interactant intactId="EBI-3911716">
        <id>Q9ULW6</id>
        <label>NAP1L2</label>
    </interactant>
    <organismsDiffer>false</organismsDiffer>
    <experiments>3</experiments>
</comment>
<comment type="interaction">
    <interactant intactId="EBI-746999">
        <id>O95198</id>
    </interactant>
    <interactant intactId="EBI-741158">
        <id>Q96HA8</id>
        <label>NTAQ1</label>
    </interactant>
    <organismsDiffer>false</organismsDiffer>
    <experiments>3</experiments>
</comment>
<comment type="interaction">
    <interactant intactId="EBI-746999">
        <id>O95198</id>
    </interactant>
    <interactant intactId="EBI-10892722">
        <id>Q6TGC4</id>
        <label>PADI6</label>
    </interactant>
    <organismsDiffer>false</organismsDiffer>
    <experiments>3</experiments>
</comment>
<comment type="interaction">
    <interactant intactId="EBI-746999">
        <id>O95198</id>
    </interactant>
    <interactant intactId="EBI-14066006">
        <id>Q4G0R1</id>
        <label>PIBF1</label>
    </interactant>
    <organismsDiffer>false</organismsDiffer>
    <experiments>3</experiments>
</comment>
<comment type="interaction">
    <interactant intactId="EBI-746999">
        <id>O95198</id>
    </interactant>
    <interactant intactId="EBI-5452779">
        <id>Q9BUI4</id>
        <label>POLR3C</label>
    </interactant>
    <organismsDiffer>false</organismsDiffer>
    <experiments>3</experiments>
</comment>
<comment type="interaction">
    <interactant intactId="EBI-746999">
        <id>O95198</id>
    </interactant>
    <interactant intactId="EBI-727004">
        <id>O00560</id>
        <label>SDCBP</label>
    </interactant>
    <organismsDiffer>false</organismsDiffer>
    <experiments>3</experiments>
</comment>
<comment type="interaction">
    <interactant intactId="EBI-746999">
        <id>O95198</id>
    </interactant>
    <interactant intactId="EBI-1045338">
        <id>Q96EY4</id>
        <label>TMA16</label>
    </interactant>
    <organismsDiffer>false</organismsDiffer>
    <experiments>7</experiments>
</comment>
<comment type="interaction">
    <interactant intactId="EBI-746999">
        <id>O95198</id>
    </interactant>
    <interactant intactId="EBI-431907">
        <id>O14787</id>
        <label>TNPO2</label>
    </interactant>
    <organismsDiffer>false</organismsDiffer>
    <experiments>4</experiments>
</comment>
<comment type="interaction">
    <interactant intactId="EBI-746999">
        <id>O95198</id>
    </interactant>
    <interactant intactId="EBI-9867283">
        <id>Q86XT4</id>
        <label>TRIM50</label>
    </interactant>
    <organismsDiffer>false</organismsDiffer>
    <experiments>3</experiments>
</comment>
<comment type="interaction">
    <interactant intactId="EBI-746999">
        <id>O95198</id>
    </interactant>
    <interactant intactId="EBI-2564581">
        <id>O95881</id>
        <label>TXNDC12</label>
    </interactant>
    <organismsDiffer>false</organismsDiffer>
    <experiments>4</experiments>
</comment>
<comment type="interaction">
    <interactant intactId="EBI-746999">
        <id>O95198</id>
    </interactant>
    <interactant intactId="EBI-10247554">
        <id>Q5TZN3</id>
        <label>UBE2C</label>
    </interactant>
    <organismsDiffer>false</organismsDiffer>
    <experiments>3</experiments>
</comment>
<comment type="interaction">
    <interactant intactId="EBI-746999">
        <id>O95198</id>
    </interactant>
    <interactant intactId="EBI-10180829">
        <id>Q7KZS0</id>
        <label>UBE2I</label>
    </interactant>
    <organismsDiffer>false</organismsDiffer>
    <experiments>3</experiments>
</comment>
<comment type="interaction">
    <interactant intactId="EBI-746999">
        <id>O95198</id>
    </interactant>
    <interactant intactId="EBI-10265237">
        <id>Q8NC26</id>
        <label>ZNF114</label>
    </interactant>
    <organismsDiffer>false</organismsDiffer>
    <experiments>8</experiments>
</comment>
<comment type="subcellular location">
    <subcellularLocation>
        <location evidence="5 7">Cytoplasm</location>
        <location evidence="5 7">Cytoskeleton</location>
    </subcellularLocation>
    <subcellularLocation>
        <location evidence="2">Cell projection</location>
        <location evidence="2">Ruffle</location>
    </subcellularLocation>
    <subcellularLocation>
        <location evidence="7">Cell projection</location>
    </subcellularLocation>
    <subcellularLocation>
        <location evidence="1">Cell projection</location>
        <location evidence="1">Lamellipodium</location>
    </subcellularLocation>
    <subcellularLocation>
        <location evidence="2">Cytoplasm</location>
        <location evidence="2">Cytosol</location>
    </subcellularLocation>
    <text evidence="2 5">A proportion colocalizes with the actin cytoskeleton (PubMed:10397770). When over-expressed, colocalizes with NPTXR in perinuclear aggresomes (By similarity).</text>
</comment>
<comment type="alternative products">
    <event type="alternative splicing"/>
    <isoform>
        <id>O95198-1</id>
        <name>1</name>
        <sequence type="displayed"/>
    </isoform>
    <isoform>
        <id>O95198-2</id>
        <name>2</name>
        <sequence type="described" ref="VSP_042837"/>
    </isoform>
    <isoform>
        <id>O95198-3</id>
        <name>3</name>
        <sequence type="described" ref="VSP_047004"/>
    </isoform>
</comment>
<comment type="tissue specificity">
    <text evidence="5">Ubiquitous. Detected throughout the brain.</text>
</comment>
<sequence length="593" mass="65975">METPPLPPACTKQGHQKPLDSKDDNTEKHCPVTVNPWHMKKAFKVMNELRSQNLLCDVTIVAEDMEISAHRVVLAACSPYFHAMFTGEMSESRAKRVRIKEVDGWTLRMLIDYVYTAEIQVTEENVQVLLPAAGLLQLQDVKKTCCEFLESQLHPVNCLGIRAFADMHACTDLLNKANTYAEQHFADVVLSEEFLNLGIEQVCSLISSDKLTISSEEKVFEAVIAWVNHDKDVRQEFMARLMEHVRLPLLPREYLVQRVEEEALVKNSSACKDYLIEAMKYHLLPTEQRILMKSVRTRLRTPMNLPKLMVVVGGQAPKAIRSVECYDFKEERWHQVAELPSRRCRAGMVYMAGLVFAVGGFNGSLRVRTVDSYDPVKDQWTSVANMRDRRSTLGAAVLNGLLYAVGGFDGSTGLSSVEAYNIKSNEWFHVAPMNTRRSSVGVGVVGGLLYAVGGYDGASRQCLSTVECYNATTNEWTYIAEMSTRRSGAGVGVLNNLLYAVGGHDGPLVRKSVEVYDPTTNAWRQVADMNMCRRNAGVCAVNGLLYVVGGDDGSCNLASVEYYNPTTDKWTVVSSCMSTGRSYAGVTVIDKPL</sequence>
<organism>
    <name type="scientific">Homo sapiens</name>
    <name type="common">Human</name>
    <dbReference type="NCBI Taxonomy" id="9606"/>
    <lineage>
        <taxon>Eukaryota</taxon>
        <taxon>Metazoa</taxon>
        <taxon>Chordata</taxon>
        <taxon>Craniata</taxon>
        <taxon>Vertebrata</taxon>
        <taxon>Euteleostomi</taxon>
        <taxon>Mammalia</taxon>
        <taxon>Eutheria</taxon>
        <taxon>Euarchontoglires</taxon>
        <taxon>Primates</taxon>
        <taxon>Haplorrhini</taxon>
        <taxon>Catarrhini</taxon>
        <taxon>Hominidae</taxon>
        <taxon>Homo</taxon>
    </lineage>
</organism>
<gene>
    <name evidence="11 13" type="primary">KLHL2</name>
</gene>
<proteinExistence type="evidence at protein level"/>
<dbReference type="EMBL" id="AF059569">
    <property type="protein sequence ID" value="AAC67502.1"/>
    <property type="molecule type" value="mRNA"/>
</dbReference>
<dbReference type="EMBL" id="AK294103">
    <property type="protein sequence ID" value="BAG57438.1"/>
    <property type="molecule type" value="mRNA"/>
</dbReference>
<dbReference type="EMBL" id="AK315372">
    <property type="protein sequence ID" value="BAG37765.1"/>
    <property type="molecule type" value="mRNA"/>
</dbReference>
<dbReference type="EMBL" id="AC012504">
    <property type="status" value="NOT_ANNOTATED_CDS"/>
    <property type="molecule type" value="Genomic_DNA"/>
</dbReference>
<dbReference type="EMBL" id="AC055120">
    <property type="status" value="NOT_ANNOTATED_CDS"/>
    <property type="molecule type" value="Genomic_DNA"/>
</dbReference>
<dbReference type="EMBL" id="AC107059">
    <property type="status" value="NOT_ANNOTATED_CDS"/>
    <property type="molecule type" value="Genomic_DNA"/>
</dbReference>
<dbReference type="EMBL" id="BC022503">
    <property type="protein sequence ID" value="AAH22503.1"/>
    <property type="molecule type" value="mRNA"/>
</dbReference>
<dbReference type="EMBL" id="BC036468">
    <property type="protein sequence ID" value="AAH36468.1"/>
    <property type="molecule type" value="mRNA"/>
</dbReference>
<dbReference type="CCDS" id="CCDS34094.1">
    <molecule id="O95198-1"/>
</dbReference>
<dbReference type="CCDS" id="CCDS54815.1">
    <molecule id="O95198-2"/>
</dbReference>
<dbReference type="CCDS" id="CCDS54816.1">
    <molecule id="O95198-3"/>
</dbReference>
<dbReference type="RefSeq" id="NP_001154993.1">
    <molecule id="O95198-2"/>
    <property type="nucleotide sequence ID" value="NM_001161521.1"/>
</dbReference>
<dbReference type="RefSeq" id="NP_001154994.1">
    <molecule id="O95198-3"/>
    <property type="nucleotide sequence ID" value="NM_001161522.1"/>
</dbReference>
<dbReference type="RefSeq" id="NP_001317952.1">
    <property type="nucleotide sequence ID" value="NM_001331023.1"/>
</dbReference>
<dbReference type="RefSeq" id="NP_001317953.1">
    <property type="nucleotide sequence ID" value="NM_001331024.1"/>
</dbReference>
<dbReference type="RefSeq" id="NP_009177.3">
    <molecule id="O95198-1"/>
    <property type="nucleotide sequence ID" value="NM_007246.3"/>
</dbReference>
<dbReference type="RefSeq" id="XP_016863165.1">
    <property type="nucleotide sequence ID" value="XM_017007676.1"/>
</dbReference>
<dbReference type="PDB" id="2XN4">
    <property type="method" value="X-ray"/>
    <property type="resolution" value="1.99 A"/>
    <property type="chains" value="A/B=294-591"/>
</dbReference>
<dbReference type="PDB" id="4CHB">
    <property type="method" value="X-ray"/>
    <property type="resolution" value="1.56 A"/>
    <property type="chains" value="A/B=294-591"/>
</dbReference>
<dbReference type="PDBsum" id="2XN4"/>
<dbReference type="PDBsum" id="4CHB"/>
<dbReference type="SMR" id="O95198"/>
<dbReference type="BioGRID" id="116431">
    <property type="interactions" value="108"/>
</dbReference>
<dbReference type="ComplexPortal" id="CPX-8025">
    <property type="entry name" value="CRL3 E3 ubiquitin ligase complex, KLHL2 variant"/>
</dbReference>
<dbReference type="ELM" id="O95198"/>
<dbReference type="FunCoup" id="O95198">
    <property type="interactions" value="720"/>
</dbReference>
<dbReference type="IntAct" id="O95198">
    <property type="interactions" value="79"/>
</dbReference>
<dbReference type="MINT" id="O95198"/>
<dbReference type="STRING" id="9606.ENSP00000424198"/>
<dbReference type="TCDB" id="8.A.160.1.4">
    <property type="family name" value="the catenin (catenin) family"/>
</dbReference>
<dbReference type="GlyGen" id="O95198">
    <property type="glycosylation" value="1 site, 1 O-linked glycan (1 site)"/>
</dbReference>
<dbReference type="iPTMnet" id="O95198"/>
<dbReference type="PhosphoSitePlus" id="O95198"/>
<dbReference type="BioMuta" id="KLHL2"/>
<dbReference type="MassIVE" id="O95198"/>
<dbReference type="PaxDb" id="9606-ENSP00000424198"/>
<dbReference type="PeptideAtlas" id="O95198"/>
<dbReference type="ProteomicsDB" id="27231"/>
<dbReference type="ProteomicsDB" id="50705">
    <molecule id="O95198-1"/>
</dbReference>
<dbReference type="ProteomicsDB" id="50706">
    <molecule id="O95198-2"/>
</dbReference>
<dbReference type="Antibodypedia" id="28300">
    <property type="antibodies" value="302 antibodies from 23 providers"/>
</dbReference>
<dbReference type="DNASU" id="11275"/>
<dbReference type="Ensembl" id="ENST00000226725.11">
    <molecule id="O95198-1"/>
    <property type="protein sequence ID" value="ENSP00000226725.6"/>
    <property type="gene ID" value="ENSG00000109466.14"/>
</dbReference>
<dbReference type="Ensembl" id="ENST00000514860.5">
    <molecule id="O95198-2"/>
    <property type="protein sequence ID" value="ENSP00000424198.1"/>
    <property type="gene ID" value="ENSG00000109466.14"/>
</dbReference>
<dbReference type="Ensembl" id="ENST00000538127.5">
    <molecule id="O95198-3"/>
    <property type="protein sequence ID" value="ENSP00000437526.1"/>
    <property type="gene ID" value="ENSG00000109466.14"/>
</dbReference>
<dbReference type="GeneID" id="11275"/>
<dbReference type="KEGG" id="hsa:11275"/>
<dbReference type="MANE-Select" id="ENST00000226725.11">
    <property type="protein sequence ID" value="ENSP00000226725.6"/>
    <property type="RefSeq nucleotide sequence ID" value="NM_007246.4"/>
    <property type="RefSeq protein sequence ID" value="NP_009177.3"/>
</dbReference>
<dbReference type="UCSC" id="uc003irb.4">
    <molecule id="O95198-1"/>
    <property type="organism name" value="human"/>
</dbReference>
<dbReference type="AGR" id="HGNC:6353"/>
<dbReference type="CTD" id="11275"/>
<dbReference type="DisGeNET" id="11275"/>
<dbReference type="GeneCards" id="KLHL2"/>
<dbReference type="HGNC" id="HGNC:6353">
    <property type="gene designation" value="KLHL2"/>
</dbReference>
<dbReference type="HPA" id="ENSG00000109466">
    <property type="expression patterns" value="Tissue enhanced (brain)"/>
</dbReference>
<dbReference type="MIM" id="605774">
    <property type="type" value="gene"/>
</dbReference>
<dbReference type="neXtProt" id="NX_O95198"/>
<dbReference type="OpenTargets" id="ENSG00000109466"/>
<dbReference type="PharmGKB" id="PA30143"/>
<dbReference type="VEuPathDB" id="HostDB:ENSG00000109466"/>
<dbReference type="eggNOG" id="KOG4441">
    <property type="taxonomic scope" value="Eukaryota"/>
</dbReference>
<dbReference type="GeneTree" id="ENSGT00940000156434"/>
<dbReference type="HOGENOM" id="CLU_004253_14_2_1"/>
<dbReference type="InParanoid" id="O95198"/>
<dbReference type="OMA" id="RPPACTK"/>
<dbReference type="OrthoDB" id="45365at2759"/>
<dbReference type="PAN-GO" id="O95198">
    <property type="GO annotations" value="0 GO annotations based on evolutionary models"/>
</dbReference>
<dbReference type="PhylomeDB" id="O95198"/>
<dbReference type="TreeFam" id="TF329218"/>
<dbReference type="PathwayCommons" id="O95198"/>
<dbReference type="Reactome" id="R-HSA-8951664">
    <property type="pathway name" value="Neddylation"/>
</dbReference>
<dbReference type="Reactome" id="R-HSA-983168">
    <property type="pathway name" value="Antigen processing: Ubiquitination &amp; Proteasome degradation"/>
</dbReference>
<dbReference type="SignaLink" id="O95198"/>
<dbReference type="SIGNOR" id="O95198"/>
<dbReference type="UniPathway" id="UPA00143"/>
<dbReference type="BioGRID-ORCS" id="11275">
    <property type="hits" value="10 hits in 1191 CRISPR screens"/>
</dbReference>
<dbReference type="ChiTaRS" id="KLHL2">
    <property type="organism name" value="human"/>
</dbReference>
<dbReference type="EvolutionaryTrace" id="O95198"/>
<dbReference type="GenomeRNAi" id="11275"/>
<dbReference type="Pharos" id="O95198">
    <property type="development level" value="Tbio"/>
</dbReference>
<dbReference type="PRO" id="PR:O95198"/>
<dbReference type="Proteomes" id="UP000005640">
    <property type="component" value="Chromosome 4"/>
</dbReference>
<dbReference type="RNAct" id="O95198">
    <property type="molecule type" value="protein"/>
</dbReference>
<dbReference type="Bgee" id="ENSG00000109466">
    <property type="expression patterns" value="Expressed in Brodmann (1909) area 23 and 199 other cell types or tissues"/>
</dbReference>
<dbReference type="ExpressionAtlas" id="O95198">
    <property type="expression patterns" value="baseline and differential"/>
</dbReference>
<dbReference type="GO" id="GO:0015629">
    <property type="term" value="C:actin cytoskeleton"/>
    <property type="evidence" value="ECO:0000314"/>
    <property type="project" value="UniProtKB"/>
</dbReference>
<dbReference type="GO" id="GO:0031463">
    <property type="term" value="C:Cul3-RING ubiquitin ligase complex"/>
    <property type="evidence" value="ECO:0000250"/>
    <property type="project" value="UniProtKB"/>
</dbReference>
<dbReference type="GO" id="GO:0005737">
    <property type="term" value="C:cytoplasm"/>
    <property type="evidence" value="ECO:0000250"/>
    <property type="project" value="UniProtKB"/>
</dbReference>
<dbReference type="GO" id="GO:0005829">
    <property type="term" value="C:cytosol"/>
    <property type="evidence" value="ECO:0000304"/>
    <property type="project" value="Reactome"/>
</dbReference>
<dbReference type="GO" id="GO:0030027">
    <property type="term" value="C:lamellipodium"/>
    <property type="evidence" value="ECO:0007669"/>
    <property type="project" value="UniProtKB-SubCell"/>
</dbReference>
<dbReference type="GO" id="GO:0001726">
    <property type="term" value="C:ruffle"/>
    <property type="evidence" value="ECO:0007669"/>
    <property type="project" value="UniProtKB-SubCell"/>
</dbReference>
<dbReference type="GO" id="GO:0003779">
    <property type="term" value="F:actin binding"/>
    <property type="evidence" value="ECO:0000314"/>
    <property type="project" value="UniProtKB"/>
</dbReference>
<dbReference type="GO" id="GO:0042802">
    <property type="term" value="F:identical protein binding"/>
    <property type="evidence" value="ECO:0000353"/>
    <property type="project" value="IntAct"/>
</dbReference>
<dbReference type="GO" id="GO:1990756">
    <property type="term" value="F:ubiquitin-like ligase-substrate adaptor activity"/>
    <property type="evidence" value="ECO:0000314"/>
    <property type="project" value="UniProtKB"/>
</dbReference>
<dbReference type="GO" id="GO:0043161">
    <property type="term" value="P:proteasome-mediated ubiquitin-dependent protein catabolic process"/>
    <property type="evidence" value="ECO:0000318"/>
    <property type="project" value="GO_Central"/>
</dbReference>
<dbReference type="GO" id="GO:0016567">
    <property type="term" value="P:protein ubiquitination"/>
    <property type="evidence" value="ECO:0000250"/>
    <property type="project" value="UniProtKB"/>
</dbReference>
<dbReference type="CDD" id="cd18512">
    <property type="entry name" value="BACK_KLHL2_Mayven"/>
    <property type="match status" value="1"/>
</dbReference>
<dbReference type="CDD" id="cd18338">
    <property type="entry name" value="BTB_POZ_KLHL2_Mayven"/>
    <property type="match status" value="1"/>
</dbReference>
<dbReference type="FunFam" id="1.25.40.420:FF:000001">
    <property type="entry name" value="Kelch-like family member 12"/>
    <property type="match status" value="1"/>
</dbReference>
<dbReference type="FunFam" id="2.120.10.80:FF:000002">
    <property type="entry name" value="Kelch-like family member 2"/>
    <property type="match status" value="1"/>
</dbReference>
<dbReference type="FunFam" id="3.30.710.10:FF:000001">
    <property type="entry name" value="Kelch-like family member 20"/>
    <property type="match status" value="1"/>
</dbReference>
<dbReference type="Gene3D" id="1.25.40.420">
    <property type="match status" value="1"/>
</dbReference>
<dbReference type="Gene3D" id="2.120.10.80">
    <property type="entry name" value="Kelch-type beta propeller"/>
    <property type="match status" value="1"/>
</dbReference>
<dbReference type="Gene3D" id="3.30.710.10">
    <property type="entry name" value="Potassium Channel Kv1.1, Chain A"/>
    <property type="match status" value="1"/>
</dbReference>
<dbReference type="InterPro" id="IPR011705">
    <property type="entry name" value="BACK"/>
</dbReference>
<dbReference type="InterPro" id="IPR017096">
    <property type="entry name" value="BTB-kelch_protein"/>
</dbReference>
<dbReference type="InterPro" id="IPR000210">
    <property type="entry name" value="BTB/POZ_dom"/>
</dbReference>
<dbReference type="InterPro" id="IPR015915">
    <property type="entry name" value="Kelch-typ_b-propeller"/>
</dbReference>
<dbReference type="InterPro" id="IPR006652">
    <property type="entry name" value="Kelch_1"/>
</dbReference>
<dbReference type="InterPro" id="IPR044072">
    <property type="entry name" value="KLHL2_BTB/POZ"/>
</dbReference>
<dbReference type="InterPro" id="IPR011333">
    <property type="entry name" value="SKP1/BTB/POZ_sf"/>
</dbReference>
<dbReference type="PANTHER" id="PTHR24412">
    <property type="entry name" value="KELCH PROTEIN"/>
    <property type="match status" value="1"/>
</dbReference>
<dbReference type="PANTHER" id="PTHR24412:SF155">
    <property type="entry name" value="KELCH-LIKE PROTEIN 2"/>
    <property type="match status" value="1"/>
</dbReference>
<dbReference type="Pfam" id="PF07707">
    <property type="entry name" value="BACK"/>
    <property type="match status" value="1"/>
</dbReference>
<dbReference type="Pfam" id="PF00651">
    <property type="entry name" value="BTB"/>
    <property type="match status" value="1"/>
</dbReference>
<dbReference type="Pfam" id="PF01344">
    <property type="entry name" value="Kelch_1"/>
    <property type="match status" value="6"/>
</dbReference>
<dbReference type="PIRSF" id="PIRSF037037">
    <property type="entry name" value="Kelch-like_protein_gigaxonin"/>
    <property type="match status" value="1"/>
</dbReference>
<dbReference type="PRINTS" id="PR00501">
    <property type="entry name" value="KELCHREPEAT"/>
</dbReference>
<dbReference type="SMART" id="SM00875">
    <property type="entry name" value="BACK"/>
    <property type="match status" value="1"/>
</dbReference>
<dbReference type="SMART" id="SM00225">
    <property type="entry name" value="BTB"/>
    <property type="match status" value="1"/>
</dbReference>
<dbReference type="SMART" id="SM00612">
    <property type="entry name" value="Kelch"/>
    <property type="match status" value="6"/>
</dbReference>
<dbReference type="SUPFAM" id="SSF117281">
    <property type="entry name" value="Kelch motif"/>
    <property type="match status" value="1"/>
</dbReference>
<dbReference type="SUPFAM" id="SSF54695">
    <property type="entry name" value="POZ domain"/>
    <property type="match status" value="1"/>
</dbReference>
<dbReference type="PROSITE" id="PS50097">
    <property type="entry name" value="BTB"/>
    <property type="match status" value="1"/>
</dbReference>
<protein>
    <recommendedName>
        <fullName evidence="12">Kelch-like protein 2</fullName>
    </recommendedName>
    <alternativeName>
        <fullName evidence="9">Actin-binding protein Mayven</fullName>
    </alternativeName>
</protein>